<protein>
    <recommendedName>
        <fullName evidence="5">Mastoparan-like peptide 12b</fullName>
    </recommendedName>
</protein>
<dbReference type="GO" id="GO:0005576">
    <property type="term" value="C:extracellular region"/>
    <property type="evidence" value="ECO:0007669"/>
    <property type="project" value="UniProtKB-SubCell"/>
</dbReference>
<dbReference type="GO" id="GO:0090729">
    <property type="term" value="F:toxin activity"/>
    <property type="evidence" value="ECO:0007669"/>
    <property type="project" value="UniProtKB-KW"/>
</dbReference>
<dbReference type="GO" id="GO:0042742">
    <property type="term" value="P:defense response to bacterium"/>
    <property type="evidence" value="ECO:0007669"/>
    <property type="project" value="UniProtKB-KW"/>
</dbReference>
<dbReference type="GO" id="GO:0050832">
    <property type="term" value="P:defense response to fungus"/>
    <property type="evidence" value="ECO:0007669"/>
    <property type="project" value="UniProtKB-KW"/>
</dbReference>
<dbReference type="GO" id="GO:0045087">
    <property type="term" value="P:innate immune response"/>
    <property type="evidence" value="ECO:0007669"/>
    <property type="project" value="UniProtKB-KW"/>
</dbReference>
<dbReference type="GO" id="GO:0031640">
    <property type="term" value="P:killing of cells of another organism"/>
    <property type="evidence" value="ECO:0007669"/>
    <property type="project" value="UniProtKB-KW"/>
</dbReference>
<comment type="function">
    <text evidence="1 2 3 4">Antimicrobial and mast cell degranulating peptide. Shows antimicrobial activity against the Gram-negative bacteria E.coli ATCC 25922 (MIC=15 ug/ml), the Gram-positive bacteria S.aureus ATCC 2592 (MIC=3.7 ug/ml) and the fungus C.albicans ATCC 2002 (MIC=7.5 ug/ml). Has little hemolytic activity (PubMed:16330062, PubMed:17046111). Its mast cell degranulation activity may be related to the activation of G-protein coupled receptors in mast cells as well as interaction with other proteins located in cell endosomal membranes in the mast cells (By similarity).</text>
</comment>
<comment type="subcellular location">
    <subcellularLocation>
        <location evidence="3 4">Secreted</location>
    </subcellularLocation>
</comment>
<comment type="tissue specificity">
    <text evidence="7 8">Expressed by the venom gland.</text>
</comment>
<comment type="mass spectrometry" mass="1483.9" method="FAB" evidence="3"/>
<comment type="similarity">
    <text evidence="6">Belongs to the MCD family. Mastoparan subfamily.</text>
</comment>
<name>MASTB_VESMG</name>
<accession>P0C1M5</accession>
<keyword id="KW-0027">Amidation</keyword>
<keyword id="KW-0044">Antibiotic</keyword>
<keyword id="KW-0929">Antimicrobial</keyword>
<keyword id="KW-0903">Direct protein sequencing</keyword>
<keyword id="KW-0295">Fungicide</keyword>
<keyword id="KW-1213">G-protein coupled receptor impairing toxin</keyword>
<keyword id="KW-0391">Immunity</keyword>
<keyword id="KW-0399">Innate immunity</keyword>
<keyword id="KW-0467">Mast cell degranulation</keyword>
<keyword id="KW-0964">Secreted</keyword>
<keyword id="KW-0800">Toxin</keyword>
<proteinExistence type="evidence at protein level"/>
<sequence length="13" mass="1486">INWKGIAAMKKLL</sequence>
<feature type="peptide" id="PRO_0000246011" description="Mastoparan-like peptide 12b" evidence="3 4">
    <location>
        <begin position="1"/>
        <end position="13"/>
    </location>
</feature>
<feature type="modified residue" description="Leucine amide" evidence="4">
    <location>
        <position position="13"/>
    </location>
</feature>
<evidence type="ECO:0000250" key="1">
    <source>
        <dbReference type="UniProtKB" id="P01514"/>
    </source>
</evidence>
<evidence type="ECO:0000250" key="2">
    <source>
        <dbReference type="UniProtKB" id="P84914"/>
    </source>
</evidence>
<evidence type="ECO:0000269" key="3">
    <source>
    </source>
</evidence>
<evidence type="ECO:0000269" key="4">
    <source>
    </source>
</evidence>
<evidence type="ECO:0000303" key="5">
    <source>
    </source>
</evidence>
<evidence type="ECO:0000305" key="6"/>
<evidence type="ECO:0000305" key="7">
    <source>
    </source>
</evidence>
<evidence type="ECO:0000305" key="8">
    <source>
    </source>
</evidence>
<reference key="1">
    <citation type="journal article" date="2006" name="Toxicon">
        <title>Two families of antimicrobial peptides from wasp (Vespa magnifica) venom.</title>
        <authorList>
            <person name="Xu X."/>
            <person name="Li J."/>
            <person name="Lu Q."/>
            <person name="Yang H."/>
            <person name="Zhang Y."/>
            <person name="Lai R."/>
        </authorList>
    </citation>
    <scope>PROTEIN SEQUENCE</scope>
    <scope>FUNCTION</scope>
    <scope>MASS SPECTROMETRY</scope>
    <scope>SUBCELLULAR LOCATION</scope>
    <source>
        <tissue>Venom</tissue>
    </source>
</reference>
<reference key="2">
    <citation type="journal article" date="2006" name="Peptides">
        <title>The mastoparanogen from wasp.</title>
        <authorList>
            <person name="Xu X."/>
            <person name="Yang H."/>
            <person name="Yu H."/>
            <person name="Li J."/>
            <person name="Lai R."/>
        </authorList>
    </citation>
    <scope>PROTEIN SEQUENCE</scope>
    <scope>FUNCTION</scope>
    <scope>AMIDATION AT LEU-13</scope>
    <scope>SUBCELLULAR LOCATION</scope>
</reference>
<organism>
    <name type="scientific">Vespa magnifica</name>
    <name type="common">Hornet</name>
    <dbReference type="NCBI Taxonomy" id="202807"/>
    <lineage>
        <taxon>Eukaryota</taxon>
        <taxon>Metazoa</taxon>
        <taxon>Ecdysozoa</taxon>
        <taxon>Arthropoda</taxon>
        <taxon>Hexapoda</taxon>
        <taxon>Insecta</taxon>
        <taxon>Pterygota</taxon>
        <taxon>Neoptera</taxon>
        <taxon>Endopterygota</taxon>
        <taxon>Hymenoptera</taxon>
        <taxon>Apocrita</taxon>
        <taxon>Aculeata</taxon>
        <taxon>Vespoidea</taxon>
        <taxon>Vespidae</taxon>
        <taxon>Vespinae</taxon>
        <taxon>Vespa</taxon>
    </lineage>
</organism>